<proteinExistence type="inferred from homology"/>
<protein>
    <recommendedName>
        <fullName evidence="1">UPF0270 protein YheU</fullName>
    </recommendedName>
</protein>
<dbReference type="EMBL" id="CU928160">
    <property type="protein sequence ID" value="CAR00293.1"/>
    <property type="molecule type" value="Genomic_DNA"/>
</dbReference>
<dbReference type="RefSeq" id="WP_000907085.1">
    <property type="nucleotide sequence ID" value="NC_011741.1"/>
</dbReference>
<dbReference type="SMR" id="B7M1Q6"/>
<dbReference type="KEGG" id="ecr:ECIAI1_3492"/>
<dbReference type="HOGENOM" id="CLU_186759_1_0_6"/>
<dbReference type="Gene3D" id="1.10.10.610">
    <property type="entry name" value="YehU-like"/>
    <property type="match status" value="1"/>
</dbReference>
<dbReference type="HAMAP" id="MF_00690">
    <property type="entry name" value="UPF0270"/>
    <property type="match status" value="1"/>
</dbReference>
<dbReference type="InterPro" id="IPR010648">
    <property type="entry name" value="UPF0270"/>
</dbReference>
<dbReference type="InterPro" id="IPR036685">
    <property type="entry name" value="YehU-like_sf"/>
</dbReference>
<dbReference type="NCBIfam" id="NF003438">
    <property type="entry name" value="PRK04966.1"/>
    <property type="match status" value="1"/>
</dbReference>
<dbReference type="Pfam" id="PF06794">
    <property type="entry name" value="UPF0270"/>
    <property type="match status" value="1"/>
</dbReference>
<dbReference type="PIRSF" id="PIRSF006169">
    <property type="entry name" value="UCP006169"/>
    <property type="match status" value="1"/>
</dbReference>
<dbReference type="SUPFAM" id="SSF118001">
    <property type="entry name" value="YehU-like"/>
    <property type="match status" value="1"/>
</dbReference>
<gene>
    <name evidence="1" type="primary">yheU</name>
    <name type="ordered locus">ECIAI1_3492</name>
</gene>
<comment type="similarity">
    <text evidence="1">Belongs to the UPF0270 family.</text>
</comment>
<organism>
    <name type="scientific">Escherichia coli O8 (strain IAI1)</name>
    <dbReference type="NCBI Taxonomy" id="585034"/>
    <lineage>
        <taxon>Bacteria</taxon>
        <taxon>Pseudomonadati</taxon>
        <taxon>Pseudomonadota</taxon>
        <taxon>Gammaproteobacteria</taxon>
        <taxon>Enterobacterales</taxon>
        <taxon>Enterobacteriaceae</taxon>
        <taxon>Escherichia</taxon>
    </lineage>
</organism>
<feature type="chain" id="PRO_1000132009" description="UPF0270 protein YheU">
    <location>
        <begin position="1"/>
        <end position="72"/>
    </location>
</feature>
<reference key="1">
    <citation type="journal article" date="2009" name="PLoS Genet.">
        <title>Organised genome dynamics in the Escherichia coli species results in highly diverse adaptive paths.</title>
        <authorList>
            <person name="Touchon M."/>
            <person name="Hoede C."/>
            <person name="Tenaillon O."/>
            <person name="Barbe V."/>
            <person name="Baeriswyl S."/>
            <person name="Bidet P."/>
            <person name="Bingen E."/>
            <person name="Bonacorsi S."/>
            <person name="Bouchier C."/>
            <person name="Bouvet O."/>
            <person name="Calteau A."/>
            <person name="Chiapello H."/>
            <person name="Clermont O."/>
            <person name="Cruveiller S."/>
            <person name="Danchin A."/>
            <person name="Diard M."/>
            <person name="Dossat C."/>
            <person name="Karoui M.E."/>
            <person name="Frapy E."/>
            <person name="Garry L."/>
            <person name="Ghigo J.M."/>
            <person name="Gilles A.M."/>
            <person name="Johnson J."/>
            <person name="Le Bouguenec C."/>
            <person name="Lescat M."/>
            <person name="Mangenot S."/>
            <person name="Martinez-Jehanne V."/>
            <person name="Matic I."/>
            <person name="Nassif X."/>
            <person name="Oztas S."/>
            <person name="Petit M.A."/>
            <person name="Pichon C."/>
            <person name="Rouy Z."/>
            <person name="Ruf C.S."/>
            <person name="Schneider D."/>
            <person name="Tourret J."/>
            <person name="Vacherie B."/>
            <person name="Vallenet D."/>
            <person name="Medigue C."/>
            <person name="Rocha E.P.C."/>
            <person name="Denamur E."/>
        </authorList>
    </citation>
    <scope>NUCLEOTIDE SEQUENCE [LARGE SCALE GENOMIC DNA]</scope>
    <source>
        <strain>IAI1</strain>
    </source>
</reference>
<name>YHEU_ECO8A</name>
<accession>B7M1Q6</accession>
<evidence type="ECO:0000255" key="1">
    <source>
        <dbReference type="HAMAP-Rule" id="MF_00690"/>
    </source>
</evidence>
<sequence length="72" mass="8470">MLIPWQDLSPETLENLIESFVLREGTDYGEHERTLEQKVADVKRQLQCGEAVLVWSELHETVNIMPRSQFRE</sequence>